<comment type="function">
    <text evidence="1">Receptor tyrosine kinase that transduces signals from the extracellular matrix into the cytoplasm by binding to hepatocyte growth factor/HGF ligand. Regulates many physiological processes including proliferation, scattering, morphogenesis and survival. Ligand binding at the cell surface induces autophosphorylation of MET on its intracellular domain that provides docking sites for downstream signaling molecules. Following activation by ligand, interacts with the PI3-kinase subunit PIK3R1, PLCG1, SRC, GRB2, STAT3 or the adapter GAB1. Recruitment of these downstream effectors by MET leads to the activation of several signaling cascades including the RAS-ERK, PI3 kinase-AKT, or PLCgamma-PKC. The RAS-ERK activation is associated with the morphogenetic effects while PI3K/AKT coordinates prosurvival effects. During embryonic development, MET signaling plays a role in gastrulation, development and migration of muscles and neuronal precursors, angiogenesis and kidney formation. In adults, participates in wound healing as well as organ regeneration and tissue remodeling. Also promotes differentiation and proliferation of hematopoietic cells (By similarity).</text>
</comment>
<comment type="function">
    <text evidence="8">(Microbial infection) Acts as a receptor for Listeria monocytogenes internalin InlB, mediating entry of the pathogen into cells.</text>
</comment>
<comment type="catalytic activity">
    <reaction evidence="7">
        <text>L-tyrosyl-[protein] + ATP = O-phospho-L-tyrosyl-[protein] + ADP + H(+)</text>
        <dbReference type="Rhea" id="RHEA:10596"/>
        <dbReference type="Rhea" id="RHEA-COMP:10136"/>
        <dbReference type="Rhea" id="RHEA-COMP:20101"/>
        <dbReference type="ChEBI" id="CHEBI:15378"/>
        <dbReference type="ChEBI" id="CHEBI:30616"/>
        <dbReference type="ChEBI" id="CHEBI:46858"/>
        <dbReference type="ChEBI" id="CHEBI:61978"/>
        <dbReference type="ChEBI" id="CHEBI:456216"/>
        <dbReference type="EC" id="2.7.10.1"/>
    </reaction>
</comment>
<comment type="activity regulation">
    <text evidence="1">In its inactive state, the C-terminal tail interacts with the catalytic domain and inhibits the kinase activity. Upon ligand binding, the C-terminal tail is displaced and becomes phosphorylated, thus increasing the kinase activity (By similarity).</text>
</comment>
<comment type="subunit">
    <text evidence="2 3">Heterodimer made of an alpha chain (50 kDa) and a beta chain (145 kDa) which are disulfide linked. Binds PLXNB1. Interacts when phosphorylated with downstream effectors including STAT3, PIK3R1, SRC, PCLG1, GRB2 and GAB1. Interacts with SPSB1, SPSB2 and SPSB4. Interacts with INPP5D/SHIP1. When phosphorylated at Tyr-1356, interacts with INPPL1/SHIP2. Interacts with RANBP9 and RANBP10, as well as SPSB1, SPSB2, SPSB3 and SPSB4. SPSB1 binding occurs in the presence and in the absence of HGF, however HGF treatment has a positive effect on this interaction. Interacts with MUC20; prevents interaction with GRB2 and suppresses hepatocyte growth factor-induced cell proliferation. Interacts with GRB10. Interacts with PTPN1 and PTPN2. Interacts with HSP90AA1 and HSP90AB1; the interaction suppresses MET kinase activity. Interacts with tensin TNS3 (By similarity). Interacts (when phosphorylated) with tensin TNS4 (via SH2 domain); the interaction increases MET protein stability by inhibiting MET endocytosis and subsequent lysosomal degradation (By similarity).</text>
</comment>
<comment type="subunit">
    <text evidence="8 9">(Microbial infection) Immunoprecipitates with L.monocytogenes InlB (PubMed:11081636). InlB probably dimerizes upon binding to MET, which encourages subsequent dimerization of MET (Probable).</text>
</comment>
<comment type="subcellular location">
    <subcellularLocation>
        <location evidence="1">Membrane</location>
        <topology evidence="1">Single-pass type I membrane protein</topology>
    </subcellularLocation>
</comment>
<comment type="domain">
    <text evidence="1">The kinase domain is involved in SPSB1 binding.</text>
</comment>
<comment type="domain">
    <text evidence="1">The beta-propeller Sema domain mediates binding to HGF.</text>
</comment>
<comment type="PTM">
    <text evidence="2">Autophosphorylated in response to ligand binding on Tyr-1234 and Tyr-1235 in the kinase domain leading to further phosphorylation of Tyr-1349 and Tyr-1356 in the C-terminal multifunctional docking site. Dephosphorylated by PTPRJ at Tyr-1349 and Tyr-1365. Dephosphorylated by PTPN1 and PTPN2 (By similarity).</text>
</comment>
<comment type="PTM">
    <text evidence="2">Ubiquitinated. Ubiquitination by CBL regulates the receptor stability and activity through proteasomal degradation (By similarity).</text>
</comment>
<comment type="PTM">
    <text evidence="2">O-mannosylation of IPT/TIG domains by TMEM260 is required for protein maturation. O-mannosylated residues are composed of single mannose glycans that are not elongated or modified.</text>
</comment>
<comment type="PTM">
    <text evidence="8">(Microbial infection) Tyrosine phosphorylation is stimulated by L.monocytogenes InlB.</text>
</comment>
<comment type="similarity">
    <text evidence="5">Belongs to the protein kinase superfamily. Tyr protein kinase family.</text>
</comment>
<proteinExistence type="evidence at protein level"/>
<gene>
    <name type="primary">MET</name>
</gene>
<evidence type="ECO:0000250" key="1"/>
<evidence type="ECO:0000250" key="2">
    <source>
        <dbReference type="UniProtKB" id="P08581"/>
    </source>
</evidence>
<evidence type="ECO:0000250" key="3">
    <source>
        <dbReference type="UniProtKB" id="P16056"/>
    </source>
</evidence>
<evidence type="ECO:0000255" key="4"/>
<evidence type="ECO:0000255" key="5">
    <source>
        <dbReference type="PROSITE-ProRule" id="PRU00159"/>
    </source>
</evidence>
<evidence type="ECO:0000255" key="6">
    <source>
        <dbReference type="PROSITE-ProRule" id="PRU00352"/>
    </source>
</evidence>
<evidence type="ECO:0000255" key="7">
    <source>
        <dbReference type="PROSITE-ProRule" id="PRU10028"/>
    </source>
</evidence>
<evidence type="ECO:0000269" key="8">
    <source>
    </source>
</evidence>
<evidence type="ECO:0000305" key="9"/>
<accession>Q2IBA6</accession>
<keyword id="KW-0067">ATP-binding</keyword>
<keyword id="KW-1015">Disulfide bond</keyword>
<keyword id="KW-0325">Glycoprotein</keyword>
<keyword id="KW-0418">Kinase</keyword>
<keyword id="KW-0472">Membrane</keyword>
<keyword id="KW-0547">Nucleotide-binding</keyword>
<keyword id="KW-0597">Phosphoprotein</keyword>
<keyword id="KW-0656">Proto-oncogene</keyword>
<keyword id="KW-0675">Receptor</keyword>
<keyword id="KW-0677">Repeat</keyword>
<keyword id="KW-0732">Signal</keyword>
<keyword id="KW-0808">Transferase</keyword>
<keyword id="KW-0812">Transmembrane</keyword>
<keyword id="KW-1133">Transmembrane helix</keyword>
<keyword id="KW-0829">Tyrosine-protein kinase</keyword>
<keyword id="KW-0832">Ubl conjugation</keyword>
<organism>
    <name type="scientific">Chlorocebus aethiops</name>
    <name type="common">Green monkey</name>
    <name type="synonym">Cercopithecus aethiops</name>
    <dbReference type="NCBI Taxonomy" id="9534"/>
    <lineage>
        <taxon>Eukaryota</taxon>
        <taxon>Metazoa</taxon>
        <taxon>Chordata</taxon>
        <taxon>Craniata</taxon>
        <taxon>Vertebrata</taxon>
        <taxon>Euteleostomi</taxon>
        <taxon>Mammalia</taxon>
        <taxon>Eutheria</taxon>
        <taxon>Euarchontoglires</taxon>
        <taxon>Primates</taxon>
        <taxon>Haplorrhini</taxon>
        <taxon>Catarrhini</taxon>
        <taxon>Cercopithecidae</taxon>
        <taxon>Cercopithecinae</taxon>
        <taxon>Chlorocebus</taxon>
    </lineage>
</organism>
<protein>
    <recommendedName>
        <fullName>Hepatocyte growth factor receptor</fullName>
        <shortName>HGF receptor</shortName>
        <ecNumber>2.7.10.1</ecNumber>
    </recommendedName>
    <alternativeName>
        <fullName>HGF/SF receptor</fullName>
    </alternativeName>
    <alternativeName>
        <fullName>Proto-oncogene c-Met</fullName>
    </alternativeName>
    <alternativeName>
        <fullName>Scatter factor receptor</fullName>
        <shortName>SF receptor</shortName>
    </alternativeName>
    <alternativeName>
        <fullName>Tyrosine-protein kinase Met</fullName>
    </alternativeName>
</protein>
<dbReference type="EC" id="2.7.10.1"/>
<dbReference type="EMBL" id="DP000029">
    <property type="protein sequence ID" value="ABC87485.1"/>
    <property type="molecule type" value="Genomic_DNA"/>
</dbReference>
<dbReference type="SMR" id="Q2IBA6"/>
<dbReference type="GlyCosmos" id="Q2IBA6">
    <property type="glycosylation" value="11 sites, No reported glycans"/>
</dbReference>
<dbReference type="BRENDA" id="2.7.10.1">
    <property type="organism ID" value="175"/>
</dbReference>
<dbReference type="GO" id="GO:0005886">
    <property type="term" value="C:plasma membrane"/>
    <property type="evidence" value="ECO:0007669"/>
    <property type="project" value="TreeGrafter"/>
</dbReference>
<dbReference type="GO" id="GO:0002116">
    <property type="term" value="C:semaphorin receptor complex"/>
    <property type="evidence" value="ECO:0007669"/>
    <property type="project" value="TreeGrafter"/>
</dbReference>
<dbReference type="GO" id="GO:0005524">
    <property type="term" value="F:ATP binding"/>
    <property type="evidence" value="ECO:0007669"/>
    <property type="project" value="UniProtKB-KW"/>
</dbReference>
<dbReference type="GO" id="GO:0017154">
    <property type="term" value="F:semaphorin receptor activity"/>
    <property type="evidence" value="ECO:0007669"/>
    <property type="project" value="InterPro"/>
</dbReference>
<dbReference type="GO" id="GO:0004714">
    <property type="term" value="F:transmembrane receptor protein tyrosine kinase activity"/>
    <property type="evidence" value="ECO:0007669"/>
    <property type="project" value="UniProtKB-EC"/>
</dbReference>
<dbReference type="GO" id="GO:0007169">
    <property type="term" value="P:cell surface receptor protein tyrosine kinase signaling pathway"/>
    <property type="evidence" value="ECO:0007669"/>
    <property type="project" value="InterPro"/>
</dbReference>
<dbReference type="GO" id="GO:0050918">
    <property type="term" value="P:positive chemotaxis"/>
    <property type="evidence" value="ECO:0000250"/>
    <property type="project" value="UniProtKB"/>
</dbReference>
<dbReference type="GO" id="GO:2001028">
    <property type="term" value="P:positive regulation of endothelial cell chemotaxis"/>
    <property type="evidence" value="ECO:0000250"/>
    <property type="project" value="UniProtKB"/>
</dbReference>
<dbReference type="GO" id="GO:0071526">
    <property type="term" value="P:semaphorin-plexin signaling pathway"/>
    <property type="evidence" value="ECO:0000250"/>
    <property type="project" value="UniProtKB"/>
</dbReference>
<dbReference type="CDD" id="cd00603">
    <property type="entry name" value="IPT_PCSR"/>
    <property type="match status" value="1"/>
</dbReference>
<dbReference type="CDD" id="cd01180">
    <property type="entry name" value="IPT_plexin_repeat1"/>
    <property type="match status" value="1"/>
</dbReference>
<dbReference type="CDD" id="cd01179">
    <property type="entry name" value="IPT_plexin_repeat2"/>
    <property type="match status" value="1"/>
</dbReference>
<dbReference type="CDD" id="cd05058">
    <property type="entry name" value="PTKc_Met_Ron"/>
    <property type="match status" value="1"/>
</dbReference>
<dbReference type="CDD" id="cd11278">
    <property type="entry name" value="Sema_MET"/>
    <property type="match status" value="1"/>
</dbReference>
<dbReference type="FunFam" id="1.10.510.10:FF:000093">
    <property type="entry name" value="Hepatocyte growth factor receptor"/>
    <property type="match status" value="1"/>
</dbReference>
<dbReference type="FunFam" id="2.130.10.10:FF:000088">
    <property type="entry name" value="Hepatocyte growth factor receptor"/>
    <property type="match status" value="1"/>
</dbReference>
<dbReference type="FunFam" id="2.60.40.10:FF:000213">
    <property type="entry name" value="Hepatocyte growth factor receptor"/>
    <property type="match status" value="1"/>
</dbReference>
<dbReference type="FunFam" id="2.60.40.10:FF:000400">
    <property type="entry name" value="Hepatocyte growth factor receptor"/>
    <property type="match status" value="1"/>
</dbReference>
<dbReference type="FunFam" id="2.60.40.10:FF:002708">
    <property type="entry name" value="Hepatocyte growth factor receptor"/>
    <property type="match status" value="1"/>
</dbReference>
<dbReference type="FunFam" id="3.30.200.20:FF:000188">
    <property type="entry name" value="Hepatocyte growth factor receptor"/>
    <property type="match status" value="1"/>
</dbReference>
<dbReference type="FunFam" id="3.30.1680.10:FF:000006">
    <property type="entry name" value="Macrophage-stimulating 1 receptor b"/>
    <property type="match status" value="1"/>
</dbReference>
<dbReference type="Gene3D" id="2.60.40.10">
    <property type="entry name" value="Immunoglobulins"/>
    <property type="match status" value="2"/>
</dbReference>
<dbReference type="Gene3D" id="3.30.200.20">
    <property type="entry name" value="Phosphorylase Kinase, domain 1"/>
    <property type="match status" value="1"/>
</dbReference>
<dbReference type="Gene3D" id="1.10.510.10">
    <property type="entry name" value="Transferase(Phosphotransferase) domain 1"/>
    <property type="match status" value="1"/>
</dbReference>
<dbReference type="Gene3D" id="2.130.10.10">
    <property type="entry name" value="YVTN repeat-like/Quinoprotein amine dehydrogenase"/>
    <property type="match status" value="1"/>
</dbReference>
<dbReference type="InterPro" id="IPR013783">
    <property type="entry name" value="Ig-like_fold"/>
</dbReference>
<dbReference type="InterPro" id="IPR014756">
    <property type="entry name" value="Ig_E-set"/>
</dbReference>
<dbReference type="InterPro" id="IPR002909">
    <property type="entry name" value="IPT_dom"/>
</dbReference>
<dbReference type="InterPro" id="IPR011009">
    <property type="entry name" value="Kinase-like_dom_sf"/>
</dbReference>
<dbReference type="InterPro" id="IPR031148">
    <property type="entry name" value="Plexin"/>
</dbReference>
<dbReference type="InterPro" id="IPR002165">
    <property type="entry name" value="Plexin_repeat"/>
</dbReference>
<dbReference type="InterPro" id="IPR000719">
    <property type="entry name" value="Prot_kinase_dom"/>
</dbReference>
<dbReference type="InterPro" id="IPR017441">
    <property type="entry name" value="Protein_kinase_ATP_BS"/>
</dbReference>
<dbReference type="InterPro" id="IPR016201">
    <property type="entry name" value="PSI"/>
</dbReference>
<dbReference type="InterPro" id="IPR001627">
    <property type="entry name" value="Semap_dom"/>
</dbReference>
<dbReference type="InterPro" id="IPR036352">
    <property type="entry name" value="Semap_dom_sf"/>
</dbReference>
<dbReference type="InterPro" id="IPR001245">
    <property type="entry name" value="Ser-Thr/Tyr_kinase_cat_dom"/>
</dbReference>
<dbReference type="InterPro" id="IPR008266">
    <property type="entry name" value="Tyr_kinase_AS"/>
</dbReference>
<dbReference type="InterPro" id="IPR020635">
    <property type="entry name" value="Tyr_kinase_cat_dom"/>
</dbReference>
<dbReference type="InterPro" id="IPR016244">
    <property type="entry name" value="Tyr_kinase_HGF/MSP_rcpt"/>
</dbReference>
<dbReference type="InterPro" id="IPR015943">
    <property type="entry name" value="WD40/YVTN_repeat-like_dom_sf"/>
</dbReference>
<dbReference type="PANTHER" id="PTHR22625:SF61">
    <property type="entry name" value="HEPATOCYTE GROWTH FACTOR RECEPTOR"/>
    <property type="match status" value="1"/>
</dbReference>
<dbReference type="PANTHER" id="PTHR22625">
    <property type="entry name" value="PLEXIN"/>
    <property type="match status" value="1"/>
</dbReference>
<dbReference type="Pfam" id="PF07714">
    <property type="entry name" value="PK_Tyr_Ser-Thr"/>
    <property type="match status" value="1"/>
</dbReference>
<dbReference type="Pfam" id="PF01437">
    <property type="entry name" value="PSI"/>
    <property type="match status" value="1"/>
</dbReference>
<dbReference type="Pfam" id="PF01403">
    <property type="entry name" value="Sema"/>
    <property type="match status" value="1"/>
</dbReference>
<dbReference type="Pfam" id="PF01833">
    <property type="entry name" value="TIG"/>
    <property type="match status" value="3"/>
</dbReference>
<dbReference type="PIRSF" id="PIRSF000617">
    <property type="entry name" value="TyrPK_HGF-R"/>
    <property type="match status" value="1"/>
</dbReference>
<dbReference type="PRINTS" id="PR00109">
    <property type="entry name" value="TYRKINASE"/>
</dbReference>
<dbReference type="SMART" id="SM00429">
    <property type="entry name" value="IPT"/>
    <property type="match status" value="4"/>
</dbReference>
<dbReference type="SMART" id="SM00423">
    <property type="entry name" value="PSI"/>
    <property type="match status" value="1"/>
</dbReference>
<dbReference type="SMART" id="SM00630">
    <property type="entry name" value="Sema"/>
    <property type="match status" value="1"/>
</dbReference>
<dbReference type="SMART" id="SM00219">
    <property type="entry name" value="TyrKc"/>
    <property type="match status" value="1"/>
</dbReference>
<dbReference type="SUPFAM" id="SSF81296">
    <property type="entry name" value="E set domains"/>
    <property type="match status" value="3"/>
</dbReference>
<dbReference type="SUPFAM" id="SSF103575">
    <property type="entry name" value="Plexin repeat"/>
    <property type="match status" value="1"/>
</dbReference>
<dbReference type="SUPFAM" id="SSF56112">
    <property type="entry name" value="Protein kinase-like (PK-like)"/>
    <property type="match status" value="1"/>
</dbReference>
<dbReference type="SUPFAM" id="SSF101912">
    <property type="entry name" value="Sema domain"/>
    <property type="match status" value="1"/>
</dbReference>
<dbReference type="PROSITE" id="PS00107">
    <property type="entry name" value="PROTEIN_KINASE_ATP"/>
    <property type="match status" value="1"/>
</dbReference>
<dbReference type="PROSITE" id="PS50011">
    <property type="entry name" value="PROTEIN_KINASE_DOM"/>
    <property type="match status" value="1"/>
</dbReference>
<dbReference type="PROSITE" id="PS00109">
    <property type="entry name" value="PROTEIN_KINASE_TYR"/>
    <property type="match status" value="1"/>
</dbReference>
<dbReference type="PROSITE" id="PS51004">
    <property type="entry name" value="SEMA"/>
    <property type="match status" value="1"/>
</dbReference>
<name>MET_CHLAE</name>
<reference key="1">
    <citation type="submission" date="2006-01" db="EMBL/GenBank/DDBJ databases">
        <title>NISC comparative sequencing initiative.</title>
        <authorList>
            <person name="Antonellis A."/>
            <person name="Ayele K."/>
            <person name="Benjamin B."/>
            <person name="Blakesley R.W."/>
            <person name="Boakye A."/>
            <person name="Bouffard G.G."/>
            <person name="Brinkley C."/>
            <person name="Brooks S."/>
            <person name="Chu G."/>
            <person name="Coleman H."/>
            <person name="Engle J."/>
            <person name="Gestole M."/>
            <person name="Greene A."/>
            <person name="Guan X."/>
            <person name="Gupta J."/>
            <person name="Haghighi P."/>
            <person name="Han J."/>
            <person name="Hansen N."/>
            <person name="Ho S.-L."/>
            <person name="Hu P."/>
            <person name="Hunter G."/>
            <person name="Hurle B."/>
            <person name="Idol J.R."/>
            <person name="Kwong P."/>
            <person name="Laric P."/>
            <person name="Larson S."/>
            <person name="Lee-Lin S.-Q."/>
            <person name="Legaspi R."/>
            <person name="Madden M."/>
            <person name="Maduro Q.L."/>
            <person name="Maduro V.B."/>
            <person name="Margulies E.H."/>
            <person name="Masiello C."/>
            <person name="Maskeri B."/>
            <person name="McDowell J."/>
            <person name="Mojidi H.A."/>
            <person name="Mullikin J.C."/>
            <person name="Oestreicher J.S."/>
            <person name="Park M."/>
            <person name="Portnoy M.E."/>
            <person name="Prasad A."/>
            <person name="Puri O."/>
            <person name="Reddix-Dugue N."/>
            <person name="Schandler K."/>
            <person name="Schueler M.G."/>
            <person name="Sison C."/>
            <person name="Stantripop S."/>
            <person name="Stephen E."/>
            <person name="Taye A."/>
            <person name="Thomas J.W."/>
            <person name="Thomas P.J."/>
            <person name="Tsipouri V."/>
            <person name="Ung L."/>
            <person name="Vogt J.L."/>
            <person name="Wetherby K.D."/>
            <person name="Young A."/>
            <person name="Green E.D."/>
        </authorList>
    </citation>
    <scope>NUCLEOTIDE SEQUENCE [LARGE SCALE GENOMIC DNA]</scope>
</reference>
<reference key="2">
    <citation type="journal article" date="2000" name="Cell">
        <title>InIB-dependent internalization of Listeria is mediated by the Met receptor tyrosine kinase.</title>
        <authorList>
            <person name="Shen Y."/>
            <person name="Naujokas M."/>
            <person name="Park M."/>
            <person name="Ireton K."/>
        </authorList>
    </citation>
    <scope>FUNCTION (MICROBIAL INFECTION)</scope>
    <scope>SUBUNIT (MICROBIAL INFECTION)</scope>
    <scope>PHOSPHORYLATION (MICROBIAL INFECTION)</scope>
</reference>
<sequence length="1381" mass="154542">MKAPAVLAPGILMLLFTLVQRSNGECKEALAKSEMNVNMKYQLPNFTAETPIQNVILHEHHIFLGATNYIYVLNEEDLQKVAEYKTGPVLEHPDCFPCQDCSSKANLSGGVWKDNINMALVVDTYYDDQLISCGSVNRGTCQRHVFPHNHTADIQSEVHCIFSPQIEEPSQCPDCVVSALGAKVLSSVKDRFINFFVGNTINSSYFPHHPLHSISVRRLKETKDGFMFLTDQSYIDVLPEFRDSYPIKYVHAFESNNFIYFLTVQRETLNAQTFHTRIIRFCSLNSGLHSYMEMPLECILTEKRKKRSTKKEVFNILQAAYVSKPGAQLARQIGASLNDDILFGVFAQSKPDSAEPMDRSAMCAFPIKYVNDFFNKIVNKNNVRCLQHFYGPNHEHCFNRTLLRNSSGCEARRDEYRAEFTTALQRVDLFMGQFSEVLLTSISTFVKGDLTIANLGTSEGRFMQVVVSRSGPSTPHVNFLLDSHPVSPEVIVEHPLNQNGYTLVVTGKKITKIPLNGLGCRHFQSCSQCLSAPPFVQCGWCHDKCVRSEECPSGTWTQQICLPAIYKVFPTSAPLEGGTRLTICGWDFGFRRNNKFDLKKTRVLLGNESCTLTLSESTMNTLKCTVGPAMNKHFNMSIIISNDHGTTQYSTFSYVDPIITSISPKYGPMAGGTLLTLTGNYLNSGNSRHISIGGKTCTLKSVSNSVLECYTPAQTISTEFAVKLKIDLANRETSIFSYREDPIVYEIHPTKSFISGGSTITGVGKNLHSVSIPRMVINVHEAGRNFTVACQHRSNSEIICCTTPSLQQLNLQLPLKTKAFFMLDGILSKYFDLIYVHNPVFKPFEKPVMISMGNENVLEIKGNDIDPEAVKGEVLKVGNKSCENIHLHSEAVLCTVPNDLLKLNSELNIEWKQAISSTVLGKVIVQPDQNFTGLIAGVVSISIALLLLLGLFLWLKKRKQIKDLGSELVRYDARVHTPHLDRLVSARSVSPTTEMVSNESVDYRATFPEDQFPNSSQNGSCRQVQYPLTDMSPILTSGDSDISSPLLQNTVHIDLSVLNPELVQAVQHVVIGPSSLIVHFNEVIGRGHFGCVYHGTLLDNDGKKIHCAVKSLNRITDIGEVSQFLTEGIIMKDFSHPNVLSLLGICLRSEGSPLVVLPYMKHGDLRNFIRNETHNPTVKDLIGFGLQVAKGMKYLASKKFVHRDLAARNCMLDEKFTVKVADFGLARDMYDKEYYSVHNKTGAKLPVKWMALESLQTQKFTTKSDVWSFGVLLWELMTRGAPPYPDVNTFDITVYLLQGRRLLQPEYCPDPLYEVMLKCWHPKAEMRPSFSELVSRISAIFSTFIGEHYVHVNATYVNVKCVAPYPSLLSSEDNADDEVDT</sequence>
<feature type="signal peptide" evidence="4">
    <location>
        <begin position="1"/>
        <end position="24"/>
    </location>
</feature>
<feature type="chain" id="PRO_0000260419" description="Hepatocyte growth factor receptor">
    <location>
        <begin position="25"/>
        <end position="1381"/>
    </location>
</feature>
<feature type="topological domain" description="Extracellular" evidence="4">
    <location>
        <begin position="25"/>
        <end position="932"/>
    </location>
</feature>
<feature type="transmembrane region" description="Helical" evidence="4">
    <location>
        <begin position="933"/>
        <end position="955"/>
    </location>
</feature>
<feature type="topological domain" description="Cytoplasmic" evidence="4">
    <location>
        <begin position="956"/>
        <end position="1381"/>
    </location>
</feature>
<feature type="domain" description="Sema" evidence="6">
    <location>
        <begin position="27"/>
        <end position="515"/>
    </location>
</feature>
<feature type="domain" description="IPT/TIG 1">
    <location>
        <begin position="563"/>
        <end position="655"/>
    </location>
</feature>
<feature type="domain" description="IPT/TIG 2">
    <location>
        <begin position="657"/>
        <end position="739"/>
    </location>
</feature>
<feature type="domain" description="IPT/TIG 3">
    <location>
        <begin position="742"/>
        <end position="836"/>
    </location>
</feature>
<feature type="domain" description="Protein kinase" evidence="5">
    <location>
        <begin position="1078"/>
        <end position="1345"/>
    </location>
</feature>
<feature type="region of interest" description="Interaction with RANBP9" evidence="1">
    <location>
        <begin position="1212"/>
        <end position="1381"/>
    </location>
</feature>
<feature type="region of interest" description="Interaction with MUC20" evidence="1">
    <location>
        <begin position="1320"/>
        <end position="1359"/>
    </location>
</feature>
<feature type="active site" description="Proton acceptor" evidence="5 7">
    <location>
        <position position="1204"/>
    </location>
</feature>
<feature type="binding site" evidence="5">
    <location>
        <begin position="1084"/>
        <end position="1092"/>
    </location>
    <ligand>
        <name>ATP</name>
        <dbReference type="ChEBI" id="CHEBI:30616"/>
    </ligand>
</feature>
<feature type="binding site" evidence="5">
    <location>
        <position position="1110"/>
    </location>
    <ligand>
        <name>ATP</name>
        <dbReference type="ChEBI" id="CHEBI:30616"/>
    </ligand>
</feature>
<feature type="site" description="Cleavage" evidence="4">
    <location>
        <begin position="307"/>
        <end position="308"/>
    </location>
</feature>
<feature type="modified residue" description="Phosphoserine" evidence="2">
    <location>
        <position position="966"/>
    </location>
</feature>
<feature type="modified residue" description="Phosphothreonine" evidence="2">
    <location>
        <position position="977"/>
    </location>
</feature>
<feature type="modified residue" description="Phosphoserine" evidence="2">
    <location>
        <position position="990"/>
    </location>
</feature>
<feature type="modified residue" description="Phosphoserine" evidence="2">
    <location>
        <position position="997"/>
    </location>
</feature>
<feature type="modified residue" description="Phosphoserine" evidence="2">
    <location>
        <position position="1000"/>
    </location>
</feature>
<feature type="modified residue" description="Phosphotyrosine" evidence="2">
    <location>
        <position position="1003"/>
    </location>
</feature>
<feature type="modified residue" description="Phosphotyrosine" evidence="2">
    <location>
        <position position="1230"/>
    </location>
</feature>
<feature type="modified residue" description="Phosphotyrosine; by autocatalysis" evidence="2">
    <location>
        <position position="1234"/>
    </location>
</feature>
<feature type="modified residue" description="Phosphotyrosine; by autocatalysis" evidence="2">
    <location>
        <position position="1235"/>
    </location>
</feature>
<feature type="modified residue" description="Phosphothreonine" evidence="2">
    <location>
        <position position="1289"/>
    </location>
</feature>
<feature type="modified residue" description="Phosphotyrosine; by autocatalysis" evidence="2">
    <location>
        <position position="1349"/>
    </location>
</feature>
<feature type="modified residue" description="Phosphotyrosine; by autocatalysis" evidence="2">
    <location>
        <position position="1356"/>
    </location>
</feature>
<feature type="modified residue" description="Phosphotyrosine" evidence="2">
    <location>
        <position position="1365"/>
    </location>
</feature>
<feature type="glycosylation site" description="N-linked (GlcNAc...) asparagine" evidence="4">
    <location>
        <position position="45"/>
    </location>
</feature>
<feature type="glycosylation site" description="N-linked (GlcNAc...) asparagine" evidence="4">
    <location>
        <position position="106"/>
    </location>
</feature>
<feature type="glycosylation site" description="N-linked (GlcNAc...) asparagine" evidence="4">
    <location>
        <position position="149"/>
    </location>
</feature>
<feature type="glycosylation site" description="N-linked (GlcNAc...) asparagine" evidence="4">
    <location>
        <position position="202"/>
    </location>
</feature>
<feature type="glycosylation site" description="N-linked (GlcNAc...) asparagine" evidence="4">
    <location>
        <position position="399"/>
    </location>
</feature>
<feature type="glycosylation site" description="N-linked (GlcNAc...) asparagine" evidence="4">
    <location>
        <position position="405"/>
    </location>
</feature>
<feature type="glycosylation site" description="O-linked (Man) threonine" evidence="2">
    <location>
        <position position="582"/>
    </location>
</feature>
<feature type="glycosylation site" description="N-linked (GlcNAc...) asparagine" evidence="4">
    <location>
        <position position="607"/>
    </location>
</feature>
<feature type="glycosylation site" description="N-linked (GlcNAc...) asparagine" evidence="4">
    <location>
        <position position="635"/>
    </location>
</feature>
<feature type="glycosylation site" description="O-linked (Man) threonine" evidence="2">
    <location>
        <position position="676"/>
    </location>
</feature>
<feature type="glycosylation site" description="O-linked (Man) threonine" evidence="2">
    <location>
        <position position="761"/>
    </location>
</feature>
<feature type="glycosylation site" description="N-linked (GlcNAc...) asparagine" evidence="4">
    <location>
        <position position="785"/>
    </location>
</feature>
<feature type="glycosylation site" description="N-linked (GlcNAc...) asparagine" evidence="4">
    <location>
        <position position="879"/>
    </location>
</feature>
<feature type="glycosylation site" description="N-linked (GlcNAc...) asparagine" evidence="4">
    <location>
        <position position="930"/>
    </location>
</feature>
<feature type="disulfide bond" evidence="6">
    <location>
        <begin position="95"/>
        <end position="101"/>
    </location>
</feature>
<feature type="disulfide bond" evidence="6">
    <location>
        <begin position="98"/>
        <end position="160"/>
    </location>
</feature>
<feature type="disulfide bond" evidence="6">
    <location>
        <begin position="133"/>
        <end position="141"/>
    </location>
</feature>
<feature type="disulfide bond" evidence="6">
    <location>
        <begin position="172"/>
        <end position="175"/>
    </location>
</feature>
<feature type="disulfide bond" evidence="6">
    <location>
        <begin position="298"/>
        <end position="363"/>
    </location>
</feature>
<feature type="disulfide bond" evidence="6">
    <location>
        <begin position="385"/>
        <end position="397"/>
    </location>
</feature>
<feature type="disulfide bond" evidence="6">
    <location>
        <begin position="520"/>
        <end position="538"/>
    </location>
</feature>
<feature type="disulfide bond" evidence="6">
    <location>
        <begin position="526"/>
        <end position="561"/>
    </location>
</feature>
<feature type="disulfide bond" evidence="6">
    <location>
        <begin position="529"/>
        <end position="545"/>
    </location>
</feature>
<feature type="disulfide bond" evidence="6">
    <location>
        <begin position="541"/>
        <end position="551"/>
    </location>
</feature>